<accession>P49382</accession>
<feature type="chain" id="PRO_0000090590" description="ADP,ATP carrier protein">
    <location>
        <begin position="1"/>
        <end position="305"/>
    </location>
</feature>
<feature type="transmembrane region" description="Helical; Name=1" evidence="4">
    <location>
        <begin position="10"/>
        <end position="37"/>
    </location>
</feature>
<feature type="transmembrane region" description="Helical; Name=2" evidence="4">
    <location>
        <begin position="78"/>
        <end position="102"/>
    </location>
</feature>
<feature type="transmembrane region" description="Helical; Name=3" evidence="4">
    <location>
        <begin position="110"/>
        <end position="130"/>
    </location>
</feature>
<feature type="transmembrane region" description="Helical; Name=4" evidence="4">
    <location>
        <begin position="180"/>
        <end position="201"/>
    </location>
</feature>
<feature type="transmembrane region" description="Helical; Name=5" evidence="4">
    <location>
        <begin position="215"/>
        <end position="235"/>
    </location>
</feature>
<feature type="transmembrane region" description="Helical; Name=6" evidence="4">
    <location>
        <begin position="275"/>
        <end position="295"/>
    </location>
</feature>
<feature type="repeat" description="Solcar 1">
    <location>
        <begin position="8"/>
        <end position="101"/>
    </location>
</feature>
<feature type="repeat" description="Solcar 2">
    <location>
        <begin position="112"/>
        <end position="204"/>
    </location>
</feature>
<feature type="repeat" description="Solcar 3">
    <location>
        <begin position="212"/>
        <end position="298"/>
    </location>
</feature>
<feature type="region of interest" description="Important for transport activity" evidence="3">
    <location>
        <begin position="239"/>
        <end position="244"/>
    </location>
</feature>
<feature type="short sequence motif" description="Nucleotide carrier signature motif" evidence="2">
    <location>
        <begin position="239"/>
        <end position="244"/>
    </location>
</feature>
<feature type="binding site" evidence="2">
    <location>
        <position position="83"/>
    </location>
    <ligand>
        <name>ADP</name>
        <dbReference type="ChEBI" id="CHEBI:456216"/>
    </ligand>
</feature>
<feature type="binding site" evidence="2">
    <location>
        <position position="95"/>
    </location>
    <ligand>
        <name>ADP</name>
        <dbReference type="ChEBI" id="CHEBI:456216"/>
    </ligand>
</feature>
<feature type="binding site" evidence="2">
    <location>
        <position position="239"/>
    </location>
    <ligand>
        <name>ADP</name>
        <dbReference type="ChEBI" id="CHEBI:456216"/>
    </ligand>
</feature>
<keyword id="KW-0050">Antiport</keyword>
<keyword id="KW-0472">Membrane</keyword>
<keyword id="KW-0496">Mitochondrion</keyword>
<keyword id="KW-0999">Mitochondrion inner membrane</keyword>
<keyword id="KW-1185">Reference proteome</keyword>
<keyword id="KW-0677">Repeat</keyword>
<keyword id="KW-0812">Transmembrane</keyword>
<keyword id="KW-1133">Transmembrane helix</keyword>
<keyword id="KW-0813">Transport</keyword>
<name>ADT_KLULA</name>
<protein>
    <recommendedName>
        <fullName>ADP,ATP carrier protein</fullName>
    </recommendedName>
    <alternativeName>
        <fullName>ADP/ATP translocase</fullName>
    </alternativeName>
    <alternativeName>
        <fullName>Adenine nucleotide translocator</fullName>
        <shortName>ANT</shortName>
    </alternativeName>
</protein>
<sequence length="305" mass="33094">MSTDKKQSNFAIDFLMGGVSAAVSKTAAAPIERVKLLIQNQDEMIKQGSLDRRYTGIVECFKRTAADEGVASFWRGNTANVIRYFPTQALNFAFKDKIKAMFGFKKEEGYAKWFAGNLASGGLAGGLSLLFVYSLDYARTRLAADSKSAKKGGERQFNGLVDVYKKTLASDGVAGLYRGFLPSVVGIVVYRGLYFGLYDSLKPLLLTGSLENSFLASFLLGWAVTTGASTASYPLDTVRRRMMMTSGQAVKYDGAFDAFRKIVAAEGIKSLFKGCGANILRGVAGAGVISMYDQLQVILFGKTFK</sequence>
<dbReference type="EMBL" id="L33797">
    <property type="protein sequence ID" value="AAC41655.1"/>
    <property type="molecule type" value="Genomic_DNA"/>
</dbReference>
<dbReference type="EMBL" id="CR382125">
    <property type="protein sequence ID" value="CAG99592.1"/>
    <property type="molecule type" value="Genomic_DNA"/>
</dbReference>
<dbReference type="PIR" id="S68154">
    <property type="entry name" value="S68154"/>
</dbReference>
<dbReference type="RefSeq" id="XP_454505.1">
    <property type="nucleotide sequence ID" value="XM_454505.1"/>
</dbReference>
<dbReference type="SMR" id="P49382"/>
<dbReference type="FunCoup" id="P49382">
    <property type="interactions" value="1065"/>
</dbReference>
<dbReference type="STRING" id="284590.P49382"/>
<dbReference type="PaxDb" id="284590-P49382"/>
<dbReference type="KEGG" id="kla:KLLA0_E12365g"/>
<dbReference type="eggNOG" id="KOG0749">
    <property type="taxonomic scope" value="Eukaryota"/>
</dbReference>
<dbReference type="HOGENOM" id="CLU_015166_12_0_1"/>
<dbReference type="InParanoid" id="P49382"/>
<dbReference type="OMA" id="CWATIYK"/>
<dbReference type="Proteomes" id="UP000000598">
    <property type="component" value="Chromosome E"/>
</dbReference>
<dbReference type="GO" id="GO:0005743">
    <property type="term" value="C:mitochondrial inner membrane"/>
    <property type="evidence" value="ECO:0007669"/>
    <property type="project" value="UniProtKB-SubCell"/>
</dbReference>
<dbReference type="GO" id="GO:0005471">
    <property type="term" value="F:ATP:ADP antiporter activity"/>
    <property type="evidence" value="ECO:0007669"/>
    <property type="project" value="InterPro"/>
</dbReference>
<dbReference type="GO" id="GO:0140021">
    <property type="term" value="P:mitochondrial ADP transmembrane transport"/>
    <property type="evidence" value="ECO:0007669"/>
    <property type="project" value="InterPro"/>
</dbReference>
<dbReference type="GO" id="GO:1990544">
    <property type="term" value="P:mitochondrial ATP transmembrane transport"/>
    <property type="evidence" value="ECO:0007669"/>
    <property type="project" value="InterPro"/>
</dbReference>
<dbReference type="FunFam" id="1.50.40.10:FF:000001">
    <property type="entry name" value="ADP,ATP carrier protein, mitochondrial"/>
    <property type="match status" value="1"/>
</dbReference>
<dbReference type="Gene3D" id="1.50.40.10">
    <property type="entry name" value="Mitochondrial carrier domain"/>
    <property type="match status" value="1"/>
</dbReference>
<dbReference type="InterPro" id="IPR002113">
    <property type="entry name" value="ADT_euk_type"/>
</dbReference>
<dbReference type="InterPro" id="IPR002067">
    <property type="entry name" value="Mit_carrier"/>
</dbReference>
<dbReference type="InterPro" id="IPR018108">
    <property type="entry name" value="Mitochondrial_sb/sol_carrier"/>
</dbReference>
<dbReference type="InterPro" id="IPR023395">
    <property type="entry name" value="Mt_carrier_dom_sf"/>
</dbReference>
<dbReference type="PANTHER" id="PTHR45635">
    <property type="entry name" value="ADP,ATP CARRIER PROTEIN 1-RELATED-RELATED"/>
    <property type="match status" value="1"/>
</dbReference>
<dbReference type="PANTHER" id="PTHR45635:SF14">
    <property type="entry name" value="ADP_ATP TRANSLOCASE"/>
    <property type="match status" value="1"/>
</dbReference>
<dbReference type="Pfam" id="PF00153">
    <property type="entry name" value="Mito_carr"/>
    <property type="match status" value="3"/>
</dbReference>
<dbReference type="PRINTS" id="PR00927">
    <property type="entry name" value="ADPTRNSLCASE"/>
</dbReference>
<dbReference type="PRINTS" id="PR00926">
    <property type="entry name" value="MITOCARRIER"/>
</dbReference>
<dbReference type="SUPFAM" id="SSF103506">
    <property type="entry name" value="Mitochondrial carrier"/>
    <property type="match status" value="1"/>
</dbReference>
<dbReference type="PROSITE" id="PS50920">
    <property type="entry name" value="SOLCAR"/>
    <property type="match status" value="3"/>
</dbReference>
<gene>
    <name type="primary">AAC</name>
    <name type="ordered locus">KLLA0E12353g</name>
</gene>
<comment type="function">
    <text evidence="1">ADP:ATP antiporter that mediates import of ADP into the mitochondrial matrix for ATP synthesis, and export of ATP out to fuel the cell. Cycles between the cytoplasmic-open state (c-state) and the matrix-open state (m-state): operates by the alternating access mechanism with a single substrate-binding site intermittently exposed to either the cytosolic (c-state) or matrix (m-state) side of the inner mitochondrial membrane.</text>
</comment>
<comment type="catalytic activity">
    <reaction evidence="1">
        <text>ADP(in) + ATP(out) = ADP(out) + ATP(in)</text>
        <dbReference type="Rhea" id="RHEA:34999"/>
        <dbReference type="ChEBI" id="CHEBI:30616"/>
        <dbReference type="ChEBI" id="CHEBI:456216"/>
    </reaction>
    <physiologicalReaction direction="left-to-right" evidence="1">
        <dbReference type="Rhea" id="RHEA:35000"/>
    </physiologicalReaction>
</comment>
<comment type="activity regulation">
    <text evidence="1">The matrix-open state (m-state) is inhibited by the membrane-permeable bongkrekic acid (BKA). The cytoplasmic-open state (c-state) is inhibited by the membrane-impermeable toxic inhibitor carboxyatractyloside (CATR).</text>
</comment>
<comment type="subunit">
    <text evidence="1">Monomer.</text>
</comment>
<comment type="subcellular location">
    <subcellularLocation>
        <location evidence="4">Mitochondrion inner membrane</location>
        <topology evidence="1">Multi-pass membrane protein</topology>
    </subcellularLocation>
</comment>
<comment type="domain">
    <text evidence="1">The transmembrane helices are not perpendicular to the plane of the membrane, but cross the membrane at an angle. Odd-numbered transmembrane helices exhibit a sharp kink, due to the presence of a conserved proline residue.</text>
</comment>
<comment type="similarity">
    <text evidence="5">Belongs to the mitochondrial carrier (TC 2.A.29) family.</text>
</comment>
<proteinExistence type="inferred from homology"/>
<evidence type="ECO:0000250" key="1">
    <source>
        <dbReference type="UniProtKB" id="G2QNH0"/>
    </source>
</evidence>
<evidence type="ECO:0000250" key="2">
    <source>
        <dbReference type="UniProtKB" id="P02722"/>
    </source>
</evidence>
<evidence type="ECO:0000250" key="3">
    <source>
        <dbReference type="UniProtKB" id="P12235"/>
    </source>
</evidence>
<evidence type="ECO:0000250" key="4">
    <source>
        <dbReference type="UniProtKB" id="P18239"/>
    </source>
</evidence>
<evidence type="ECO:0000305" key="5"/>
<organism>
    <name type="scientific">Kluyveromyces lactis (strain ATCC 8585 / CBS 2359 / DSM 70799 / NBRC 1267 / NRRL Y-1140 / WM37)</name>
    <name type="common">Yeast</name>
    <name type="synonym">Candida sphaerica</name>
    <dbReference type="NCBI Taxonomy" id="284590"/>
    <lineage>
        <taxon>Eukaryota</taxon>
        <taxon>Fungi</taxon>
        <taxon>Dikarya</taxon>
        <taxon>Ascomycota</taxon>
        <taxon>Saccharomycotina</taxon>
        <taxon>Saccharomycetes</taxon>
        <taxon>Saccharomycetales</taxon>
        <taxon>Saccharomycetaceae</taxon>
        <taxon>Kluyveromyces</taxon>
    </lineage>
</organism>
<reference key="1">
    <citation type="journal article" date="1995" name="Curr. Genet.">
        <title>A Kluyveromyces lactis gene homologue to AAC2 complements the Saccharomyces cerevisiae op1 mutation.</title>
        <authorList>
            <person name="Viola A.M."/>
            <person name="Galeotti C.L."/>
            <person name="Goffrini P."/>
            <person name="Ficarelli A."/>
            <person name="Ferrero I."/>
        </authorList>
    </citation>
    <scope>NUCLEOTIDE SEQUENCE [GENOMIC DNA]</scope>
</reference>
<reference key="2">
    <citation type="journal article" date="2004" name="Nature">
        <title>Genome evolution in yeasts.</title>
        <authorList>
            <person name="Dujon B."/>
            <person name="Sherman D."/>
            <person name="Fischer G."/>
            <person name="Durrens P."/>
            <person name="Casaregola S."/>
            <person name="Lafontaine I."/>
            <person name="de Montigny J."/>
            <person name="Marck C."/>
            <person name="Neuveglise C."/>
            <person name="Talla E."/>
            <person name="Goffard N."/>
            <person name="Frangeul L."/>
            <person name="Aigle M."/>
            <person name="Anthouard V."/>
            <person name="Babour A."/>
            <person name="Barbe V."/>
            <person name="Barnay S."/>
            <person name="Blanchin S."/>
            <person name="Beckerich J.-M."/>
            <person name="Beyne E."/>
            <person name="Bleykasten C."/>
            <person name="Boisrame A."/>
            <person name="Boyer J."/>
            <person name="Cattolico L."/>
            <person name="Confanioleri F."/>
            <person name="de Daruvar A."/>
            <person name="Despons L."/>
            <person name="Fabre E."/>
            <person name="Fairhead C."/>
            <person name="Ferry-Dumazet H."/>
            <person name="Groppi A."/>
            <person name="Hantraye F."/>
            <person name="Hennequin C."/>
            <person name="Jauniaux N."/>
            <person name="Joyet P."/>
            <person name="Kachouri R."/>
            <person name="Kerrest A."/>
            <person name="Koszul R."/>
            <person name="Lemaire M."/>
            <person name="Lesur I."/>
            <person name="Ma L."/>
            <person name="Muller H."/>
            <person name="Nicaud J.-M."/>
            <person name="Nikolski M."/>
            <person name="Oztas S."/>
            <person name="Ozier-Kalogeropoulos O."/>
            <person name="Pellenz S."/>
            <person name="Potier S."/>
            <person name="Richard G.-F."/>
            <person name="Straub M.-L."/>
            <person name="Suleau A."/>
            <person name="Swennen D."/>
            <person name="Tekaia F."/>
            <person name="Wesolowski-Louvel M."/>
            <person name="Westhof E."/>
            <person name="Wirth B."/>
            <person name="Zeniou-Meyer M."/>
            <person name="Zivanovic Y."/>
            <person name="Bolotin-Fukuhara M."/>
            <person name="Thierry A."/>
            <person name="Bouchier C."/>
            <person name="Caudron B."/>
            <person name="Scarpelli C."/>
            <person name="Gaillardin C."/>
            <person name="Weissenbach J."/>
            <person name="Wincker P."/>
            <person name="Souciet J.-L."/>
        </authorList>
    </citation>
    <scope>NUCLEOTIDE SEQUENCE [LARGE SCALE GENOMIC DNA]</scope>
    <source>
        <strain>ATCC 8585 / CBS 2359 / DSM 70799 / NBRC 1267 / NRRL Y-1140 / WM37</strain>
    </source>
</reference>